<protein>
    <recommendedName>
        <fullName evidence="1">CTP synthase</fullName>
        <ecNumber evidence="1">6.3.4.2</ecNumber>
    </recommendedName>
    <alternativeName>
        <fullName evidence="1">Cytidine 5'-triphosphate synthase</fullName>
    </alternativeName>
    <alternativeName>
        <fullName evidence="1">Cytidine triphosphate synthetase</fullName>
        <shortName evidence="1">CTP synthetase</shortName>
        <shortName evidence="1">CTPS</shortName>
    </alternativeName>
    <alternativeName>
        <fullName evidence="1">UTP--ammonia ligase</fullName>
    </alternativeName>
</protein>
<dbReference type="EC" id="6.3.4.2" evidence="1"/>
<dbReference type="EMBL" id="AL939110">
    <property type="protein sequence ID" value="CAB52840.1"/>
    <property type="molecule type" value="Genomic_DNA"/>
</dbReference>
<dbReference type="PIR" id="T36879">
    <property type="entry name" value="T36879"/>
</dbReference>
<dbReference type="RefSeq" id="NP_626047.1">
    <property type="nucleotide sequence ID" value="NC_003888.3"/>
</dbReference>
<dbReference type="RefSeq" id="WP_011027968.1">
    <property type="nucleotide sequence ID" value="NZ_CP042324.1"/>
</dbReference>
<dbReference type="SMR" id="Q9S224"/>
<dbReference type="FunCoup" id="Q9S224">
    <property type="interactions" value="459"/>
</dbReference>
<dbReference type="STRING" id="100226.gene:17759370"/>
<dbReference type="MEROPS" id="C26.964"/>
<dbReference type="PaxDb" id="100226-SCO1776"/>
<dbReference type="KEGG" id="sco:SCO1776"/>
<dbReference type="PATRIC" id="fig|100226.15.peg.1793"/>
<dbReference type="eggNOG" id="COG0504">
    <property type="taxonomic scope" value="Bacteria"/>
</dbReference>
<dbReference type="HOGENOM" id="CLU_011675_5_0_11"/>
<dbReference type="InParanoid" id="Q9S224"/>
<dbReference type="OrthoDB" id="9801107at2"/>
<dbReference type="PhylomeDB" id="Q9S224"/>
<dbReference type="UniPathway" id="UPA00159">
    <property type="reaction ID" value="UER00277"/>
</dbReference>
<dbReference type="Proteomes" id="UP000001973">
    <property type="component" value="Chromosome"/>
</dbReference>
<dbReference type="GO" id="GO:0005829">
    <property type="term" value="C:cytosol"/>
    <property type="evidence" value="ECO:0000318"/>
    <property type="project" value="GO_Central"/>
</dbReference>
<dbReference type="GO" id="GO:0005524">
    <property type="term" value="F:ATP binding"/>
    <property type="evidence" value="ECO:0007669"/>
    <property type="project" value="UniProtKB-KW"/>
</dbReference>
<dbReference type="GO" id="GO:0003883">
    <property type="term" value="F:CTP synthase activity"/>
    <property type="evidence" value="ECO:0000318"/>
    <property type="project" value="GO_Central"/>
</dbReference>
<dbReference type="GO" id="GO:0004359">
    <property type="term" value="F:glutaminase activity"/>
    <property type="evidence" value="ECO:0007669"/>
    <property type="project" value="RHEA"/>
</dbReference>
<dbReference type="GO" id="GO:0042802">
    <property type="term" value="F:identical protein binding"/>
    <property type="evidence" value="ECO:0000318"/>
    <property type="project" value="GO_Central"/>
</dbReference>
<dbReference type="GO" id="GO:0046872">
    <property type="term" value="F:metal ion binding"/>
    <property type="evidence" value="ECO:0007669"/>
    <property type="project" value="UniProtKB-KW"/>
</dbReference>
<dbReference type="GO" id="GO:0044210">
    <property type="term" value="P:'de novo' CTP biosynthetic process"/>
    <property type="evidence" value="ECO:0007669"/>
    <property type="project" value="UniProtKB-UniRule"/>
</dbReference>
<dbReference type="GO" id="GO:0006241">
    <property type="term" value="P:CTP biosynthetic process"/>
    <property type="evidence" value="ECO:0000318"/>
    <property type="project" value="GO_Central"/>
</dbReference>
<dbReference type="GO" id="GO:0019856">
    <property type="term" value="P:pyrimidine nucleobase biosynthetic process"/>
    <property type="evidence" value="ECO:0000318"/>
    <property type="project" value="GO_Central"/>
</dbReference>
<dbReference type="CDD" id="cd03113">
    <property type="entry name" value="CTPS_N"/>
    <property type="match status" value="1"/>
</dbReference>
<dbReference type="CDD" id="cd01746">
    <property type="entry name" value="GATase1_CTP_Synthase"/>
    <property type="match status" value="1"/>
</dbReference>
<dbReference type="FunFam" id="3.40.50.300:FF:000009">
    <property type="entry name" value="CTP synthase"/>
    <property type="match status" value="1"/>
</dbReference>
<dbReference type="FunFam" id="3.40.50.880:FF:000002">
    <property type="entry name" value="CTP synthase"/>
    <property type="match status" value="1"/>
</dbReference>
<dbReference type="Gene3D" id="3.40.50.880">
    <property type="match status" value="1"/>
</dbReference>
<dbReference type="Gene3D" id="3.40.50.300">
    <property type="entry name" value="P-loop containing nucleotide triphosphate hydrolases"/>
    <property type="match status" value="1"/>
</dbReference>
<dbReference type="HAMAP" id="MF_01227">
    <property type="entry name" value="PyrG"/>
    <property type="match status" value="1"/>
</dbReference>
<dbReference type="InterPro" id="IPR029062">
    <property type="entry name" value="Class_I_gatase-like"/>
</dbReference>
<dbReference type="InterPro" id="IPR004468">
    <property type="entry name" value="CTP_synthase"/>
</dbReference>
<dbReference type="InterPro" id="IPR017456">
    <property type="entry name" value="CTP_synthase_N"/>
</dbReference>
<dbReference type="InterPro" id="IPR017926">
    <property type="entry name" value="GATASE"/>
</dbReference>
<dbReference type="InterPro" id="IPR033828">
    <property type="entry name" value="GATase1_CTP_Synthase"/>
</dbReference>
<dbReference type="InterPro" id="IPR027417">
    <property type="entry name" value="P-loop_NTPase"/>
</dbReference>
<dbReference type="NCBIfam" id="NF003792">
    <property type="entry name" value="PRK05380.1"/>
    <property type="match status" value="1"/>
</dbReference>
<dbReference type="NCBIfam" id="TIGR00337">
    <property type="entry name" value="PyrG"/>
    <property type="match status" value="1"/>
</dbReference>
<dbReference type="PANTHER" id="PTHR11550">
    <property type="entry name" value="CTP SYNTHASE"/>
    <property type="match status" value="1"/>
</dbReference>
<dbReference type="PANTHER" id="PTHR11550:SF0">
    <property type="entry name" value="CTP SYNTHASE-RELATED"/>
    <property type="match status" value="1"/>
</dbReference>
<dbReference type="Pfam" id="PF06418">
    <property type="entry name" value="CTP_synth_N"/>
    <property type="match status" value="1"/>
</dbReference>
<dbReference type="Pfam" id="PF00117">
    <property type="entry name" value="GATase"/>
    <property type="match status" value="1"/>
</dbReference>
<dbReference type="SUPFAM" id="SSF52317">
    <property type="entry name" value="Class I glutamine amidotransferase-like"/>
    <property type="match status" value="1"/>
</dbReference>
<dbReference type="SUPFAM" id="SSF52540">
    <property type="entry name" value="P-loop containing nucleoside triphosphate hydrolases"/>
    <property type="match status" value="1"/>
</dbReference>
<dbReference type="PROSITE" id="PS51273">
    <property type="entry name" value="GATASE_TYPE_1"/>
    <property type="match status" value="1"/>
</dbReference>
<reference key="1">
    <citation type="journal article" date="2002" name="Nature">
        <title>Complete genome sequence of the model actinomycete Streptomyces coelicolor A3(2).</title>
        <authorList>
            <person name="Bentley S.D."/>
            <person name="Chater K.F."/>
            <person name="Cerdeno-Tarraga A.-M."/>
            <person name="Challis G.L."/>
            <person name="Thomson N.R."/>
            <person name="James K.D."/>
            <person name="Harris D.E."/>
            <person name="Quail M.A."/>
            <person name="Kieser H."/>
            <person name="Harper D."/>
            <person name="Bateman A."/>
            <person name="Brown S."/>
            <person name="Chandra G."/>
            <person name="Chen C.W."/>
            <person name="Collins M."/>
            <person name="Cronin A."/>
            <person name="Fraser A."/>
            <person name="Goble A."/>
            <person name="Hidalgo J."/>
            <person name="Hornsby T."/>
            <person name="Howarth S."/>
            <person name="Huang C.-H."/>
            <person name="Kieser T."/>
            <person name="Larke L."/>
            <person name="Murphy L.D."/>
            <person name="Oliver K."/>
            <person name="O'Neil S."/>
            <person name="Rabbinowitsch E."/>
            <person name="Rajandream M.A."/>
            <person name="Rutherford K.M."/>
            <person name="Rutter S."/>
            <person name="Seeger K."/>
            <person name="Saunders D."/>
            <person name="Sharp S."/>
            <person name="Squares R."/>
            <person name="Squares S."/>
            <person name="Taylor K."/>
            <person name="Warren T."/>
            <person name="Wietzorrek A."/>
            <person name="Woodward J.R."/>
            <person name="Barrell B.G."/>
            <person name="Parkhill J."/>
            <person name="Hopwood D.A."/>
        </authorList>
    </citation>
    <scope>NUCLEOTIDE SEQUENCE [LARGE SCALE GENOMIC DNA]</scope>
    <source>
        <strain>ATCC BAA-471 / A3(2) / M145</strain>
    </source>
</reference>
<accession>Q9S224</accession>
<gene>
    <name evidence="1" type="primary">pyrG</name>
    <name type="ordered locus">SCO1776</name>
    <name type="ORF">SCI51.16c</name>
</gene>
<organism>
    <name type="scientific">Streptomyces coelicolor (strain ATCC BAA-471 / A3(2) / M145)</name>
    <dbReference type="NCBI Taxonomy" id="100226"/>
    <lineage>
        <taxon>Bacteria</taxon>
        <taxon>Bacillati</taxon>
        <taxon>Actinomycetota</taxon>
        <taxon>Actinomycetes</taxon>
        <taxon>Kitasatosporales</taxon>
        <taxon>Streptomycetaceae</taxon>
        <taxon>Streptomyces</taxon>
        <taxon>Streptomyces albidoflavus group</taxon>
    </lineage>
</organism>
<proteinExistence type="inferred from homology"/>
<keyword id="KW-0067">ATP-binding</keyword>
<keyword id="KW-0315">Glutamine amidotransferase</keyword>
<keyword id="KW-0436">Ligase</keyword>
<keyword id="KW-0460">Magnesium</keyword>
<keyword id="KW-0479">Metal-binding</keyword>
<keyword id="KW-0547">Nucleotide-binding</keyword>
<keyword id="KW-0665">Pyrimidine biosynthesis</keyword>
<keyword id="KW-1185">Reference proteome</keyword>
<sequence length="549" mass="60131">MPPKSSTTKHIFVTGGVASSLGKGLTASSLGMLLKARGLRVVMQKLDPYLNVDPGTMNPFQHGEVFVTNDGAETDLDIGHYERFLDRDLDGSANVTTGQVYSTVIAKERRGEYLGDTVQVIPHITNEIKHRIRRMATDEVDVVITEVGGTVGDIESLPFLETVRQVRHEVGRDNVFVVHISLLPYIGPSGELKTKPTQHSVAALRNIGIQPDAIVLRCDREVPTAIKRKISLMCDVDEAAVVACPDARSIYDIPKVIHTEGLDAYVVRRMDLPFRDVDWTTWDDLLDRVHNPEHEIVMALVGKYIDLPDAYLSVTEALRAGGFANKARVKIKWVTSDDCKTPAGARVQLGDVDAICIPGGFGERGVTGKVGAIQYARENGIPLLGLCLGLQCIVVEAARNLAGVADANSTEFDPATAHPVVSTMAEQLDIVAGEGDMGGTMRLGMYPAKLAEGSIVREVYDGKEYVEERHRHRYEVNNAYRAELEKKAGIVFSGTSPDGKLVEYVEYPRDVHPYLVATQAHPELRSRPTRPHPLFAGLVKAAVERKTSK</sequence>
<evidence type="ECO:0000255" key="1">
    <source>
        <dbReference type="HAMAP-Rule" id="MF_01227"/>
    </source>
</evidence>
<comment type="function">
    <text evidence="1">Catalyzes the ATP-dependent amination of UTP to CTP with either L-glutamine or ammonia as the source of nitrogen. Regulates intracellular CTP levels through interactions with the four ribonucleotide triphosphates.</text>
</comment>
<comment type="catalytic activity">
    <reaction evidence="1">
        <text>UTP + L-glutamine + ATP + H2O = CTP + L-glutamate + ADP + phosphate + 2 H(+)</text>
        <dbReference type="Rhea" id="RHEA:26426"/>
        <dbReference type="ChEBI" id="CHEBI:15377"/>
        <dbReference type="ChEBI" id="CHEBI:15378"/>
        <dbReference type="ChEBI" id="CHEBI:29985"/>
        <dbReference type="ChEBI" id="CHEBI:30616"/>
        <dbReference type="ChEBI" id="CHEBI:37563"/>
        <dbReference type="ChEBI" id="CHEBI:43474"/>
        <dbReference type="ChEBI" id="CHEBI:46398"/>
        <dbReference type="ChEBI" id="CHEBI:58359"/>
        <dbReference type="ChEBI" id="CHEBI:456216"/>
        <dbReference type="EC" id="6.3.4.2"/>
    </reaction>
</comment>
<comment type="catalytic activity">
    <reaction evidence="1">
        <text>L-glutamine + H2O = L-glutamate + NH4(+)</text>
        <dbReference type="Rhea" id="RHEA:15889"/>
        <dbReference type="ChEBI" id="CHEBI:15377"/>
        <dbReference type="ChEBI" id="CHEBI:28938"/>
        <dbReference type="ChEBI" id="CHEBI:29985"/>
        <dbReference type="ChEBI" id="CHEBI:58359"/>
    </reaction>
</comment>
<comment type="catalytic activity">
    <reaction evidence="1">
        <text>UTP + NH4(+) + ATP = CTP + ADP + phosphate + 2 H(+)</text>
        <dbReference type="Rhea" id="RHEA:16597"/>
        <dbReference type="ChEBI" id="CHEBI:15378"/>
        <dbReference type="ChEBI" id="CHEBI:28938"/>
        <dbReference type="ChEBI" id="CHEBI:30616"/>
        <dbReference type="ChEBI" id="CHEBI:37563"/>
        <dbReference type="ChEBI" id="CHEBI:43474"/>
        <dbReference type="ChEBI" id="CHEBI:46398"/>
        <dbReference type="ChEBI" id="CHEBI:456216"/>
    </reaction>
</comment>
<comment type="activity regulation">
    <text evidence="1">Allosterically activated by GTP, when glutamine is the substrate; GTP has no effect on the reaction when ammonia is the substrate. The allosteric effector GTP functions by stabilizing the protein conformation that binds the tetrahedral intermediate(s) formed during glutamine hydrolysis. Inhibited by the product CTP, via allosteric rather than competitive inhibition.</text>
</comment>
<comment type="pathway">
    <text evidence="1">Pyrimidine metabolism; CTP biosynthesis via de novo pathway; CTP from UDP: step 2/2.</text>
</comment>
<comment type="subunit">
    <text evidence="1">Homotetramer.</text>
</comment>
<comment type="miscellaneous">
    <text evidence="1">CTPSs have evolved a hybrid strategy for distinguishing between UTP and CTP. The overlapping regions of the product feedback inhibitory and substrate sites recognize a common feature in both compounds, the triphosphate moiety. To differentiate isosteric substrate and product pyrimidine rings, an additional pocket far from the expected kinase/ligase catalytic site, specifically recognizes the cytosine and ribose portions of the product inhibitor.</text>
</comment>
<comment type="similarity">
    <text evidence="1">Belongs to the CTP synthase family.</text>
</comment>
<name>PYRG_STRCO</name>
<feature type="chain" id="PRO_0000138232" description="CTP synthase">
    <location>
        <begin position="1"/>
        <end position="549"/>
    </location>
</feature>
<feature type="domain" description="Glutamine amidotransferase type-1" evidence="1">
    <location>
        <begin position="301"/>
        <end position="548"/>
    </location>
</feature>
<feature type="region of interest" description="Amidoligase domain" evidence="1">
    <location>
        <begin position="1"/>
        <end position="272"/>
    </location>
</feature>
<feature type="active site" description="Nucleophile; for glutamine hydrolysis" evidence="1">
    <location>
        <position position="387"/>
    </location>
</feature>
<feature type="active site" evidence="1">
    <location>
        <position position="521"/>
    </location>
</feature>
<feature type="active site" evidence="1">
    <location>
        <position position="523"/>
    </location>
</feature>
<feature type="binding site" evidence="1">
    <location>
        <position position="19"/>
    </location>
    <ligand>
        <name>CTP</name>
        <dbReference type="ChEBI" id="CHEBI:37563"/>
        <note>allosteric inhibitor</note>
    </ligand>
</feature>
<feature type="binding site" evidence="1">
    <location>
        <position position="19"/>
    </location>
    <ligand>
        <name>UTP</name>
        <dbReference type="ChEBI" id="CHEBI:46398"/>
    </ligand>
</feature>
<feature type="binding site" evidence="1">
    <location>
        <begin position="20"/>
        <end position="25"/>
    </location>
    <ligand>
        <name>ATP</name>
        <dbReference type="ChEBI" id="CHEBI:30616"/>
    </ligand>
</feature>
<feature type="binding site" evidence="1">
    <location>
        <position position="77"/>
    </location>
    <ligand>
        <name>ATP</name>
        <dbReference type="ChEBI" id="CHEBI:30616"/>
    </ligand>
</feature>
<feature type="binding site" evidence="1">
    <location>
        <position position="77"/>
    </location>
    <ligand>
        <name>Mg(2+)</name>
        <dbReference type="ChEBI" id="CHEBI:18420"/>
    </ligand>
</feature>
<feature type="binding site" evidence="1">
    <location>
        <position position="146"/>
    </location>
    <ligand>
        <name>Mg(2+)</name>
        <dbReference type="ChEBI" id="CHEBI:18420"/>
    </ligand>
</feature>
<feature type="binding site" evidence="1">
    <location>
        <begin position="153"/>
        <end position="155"/>
    </location>
    <ligand>
        <name>CTP</name>
        <dbReference type="ChEBI" id="CHEBI:37563"/>
        <note>allosteric inhibitor</note>
    </ligand>
</feature>
<feature type="binding site" evidence="1">
    <location>
        <begin position="193"/>
        <end position="198"/>
    </location>
    <ligand>
        <name>CTP</name>
        <dbReference type="ChEBI" id="CHEBI:37563"/>
        <note>allosteric inhibitor</note>
    </ligand>
</feature>
<feature type="binding site" evidence="1">
    <location>
        <begin position="193"/>
        <end position="198"/>
    </location>
    <ligand>
        <name>UTP</name>
        <dbReference type="ChEBI" id="CHEBI:46398"/>
    </ligand>
</feature>
<feature type="binding site" evidence="1">
    <location>
        <position position="229"/>
    </location>
    <ligand>
        <name>CTP</name>
        <dbReference type="ChEBI" id="CHEBI:37563"/>
        <note>allosteric inhibitor</note>
    </ligand>
</feature>
<feature type="binding site" evidence="1">
    <location>
        <position position="229"/>
    </location>
    <ligand>
        <name>UTP</name>
        <dbReference type="ChEBI" id="CHEBI:46398"/>
    </ligand>
</feature>
<feature type="binding site" evidence="1">
    <location>
        <position position="360"/>
    </location>
    <ligand>
        <name>L-glutamine</name>
        <dbReference type="ChEBI" id="CHEBI:58359"/>
    </ligand>
</feature>
<feature type="binding site" evidence="1">
    <location>
        <begin position="388"/>
        <end position="391"/>
    </location>
    <ligand>
        <name>L-glutamine</name>
        <dbReference type="ChEBI" id="CHEBI:58359"/>
    </ligand>
</feature>
<feature type="binding site" evidence="1">
    <location>
        <position position="411"/>
    </location>
    <ligand>
        <name>L-glutamine</name>
        <dbReference type="ChEBI" id="CHEBI:58359"/>
    </ligand>
</feature>
<feature type="binding site" evidence="1">
    <location>
        <position position="473"/>
    </location>
    <ligand>
        <name>L-glutamine</name>
        <dbReference type="ChEBI" id="CHEBI:58359"/>
    </ligand>
</feature>